<proteinExistence type="evidence at protein level"/>
<feature type="chain" id="PRO_0000081899" description="RNA-binding motif protein, Y chromosome, family 1 member A1">
    <location>
        <begin position="1"/>
        <end position="496"/>
    </location>
</feature>
<feature type="domain" description="RRM" evidence="1">
    <location>
        <begin position="8"/>
        <end position="85"/>
    </location>
</feature>
<feature type="region of interest" description="Disordered" evidence="2">
    <location>
        <begin position="78"/>
        <end position="349"/>
    </location>
</feature>
<feature type="region of interest" description="Disordered" evidence="2">
    <location>
        <begin position="452"/>
        <end position="496"/>
    </location>
</feature>
<feature type="compositionally biased region" description="Low complexity" evidence="2">
    <location>
        <begin position="97"/>
        <end position="114"/>
    </location>
</feature>
<feature type="compositionally biased region" description="Low complexity" evidence="2">
    <location>
        <begin position="149"/>
        <end position="159"/>
    </location>
</feature>
<feature type="compositionally biased region" description="Polar residues" evidence="2">
    <location>
        <begin position="175"/>
        <end position="184"/>
    </location>
</feature>
<feature type="compositionally biased region" description="Basic and acidic residues" evidence="2">
    <location>
        <begin position="204"/>
        <end position="214"/>
    </location>
</feature>
<feature type="compositionally biased region" description="Basic and acidic residues" evidence="2">
    <location>
        <begin position="242"/>
        <end position="253"/>
    </location>
</feature>
<feature type="compositionally biased region" description="Basic and acidic residues" evidence="2">
    <location>
        <begin position="276"/>
        <end position="289"/>
    </location>
</feature>
<feature type="compositionally biased region" description="Basic and acidic residues" evidence="2">
    <location>
        <begin position="313"/>
        <end position="326"/>
    </location>
</feature>
<feature type="compositionally biased region" description="Basic and acidic residues" evidence="2">
    <location>
        <begin position="335"/>
        <end position="349"/>
    </location>
</feature>
<feature type="compositionally biased region" description="Basic and acidic residues" evidence="2">
    <location>
        <begin position="484"/>
        <end position="496"/>
    </location>
</feature>
<feature type="splice variant" id="VSP_042315" description="In isoform 3." evidence="10">
    <location>
        <begin position="1"/>
        <end position="140"/>
    </location>
</feature>
<feature type="splice variant" id="VSP_042316" description="In isoform 2." evidence="10">
    <location>
        <begin position="327"/>
        <end position="363"/>
    </location>
</feature>
<feature type="strand" evidence="11">
    <location>
        <begin position="9"/>
        <end position="13"/>
    </location>
</feature>
<feature type="turn" evidence="11">
    <location>
        <begin position="16"/>
        <end position="18"/>
    </location>
</feature>
<feature type="helix" evidence="11">
    <location>
        <begin position="21"/>
        <end position="29"/>
    </location>
</feature>
<feature type="strand" evidence="11">
    <location>
        <begin position="35"/>
        <end position="40"/>
    </location>
</feature>
<feature type="turn" evidence="11">
    <location>
        <begin position="43"/>
        <end position="45"/>
    </location>
</feature>
<feature type="strand" evidence="11">
    <location>
        <begin position="50"/>
        <end position="54"/>
    </location>
</feature>
<feature type="helix" evidence="11">
    <location>
        <begin position="58"/>
        <end position="67"/>
    </location>
</feature>
<feature type="strand" evidence="11">
    <location>
        <begin position="74"/>
        <end position="77"/>
    </location>
</feature>
<feature type="strand" evidence="11">
    <location>
        <begin position="79"/>
        <end position="82"/>
    </location>
</feature>
<feature type="strand" evidence="11">
    <location>
        <begin position="89"/>
        <end position="93"/>
    </location>
</feature>
<evidence type="ECO:0000255" key="1">
    <source>
        <dbReference type="PROSITE-ProRule" id="PRU00176"/>
    </source>
</evidence>
<evidence type="ECO:0000256" key="2">
    <source>
        <dbReference type="SAM" id="MobiDB-lite"/>
    </source>
</evidence>
<evidence type="ECO:0000269" key="3">
    <source>
    </source>
</evidence>
<evidence type="ECO:0000269" key="4">
    <source>
    </source>
</evidence>
<evidence type="ECO:0000269" key="5">
    <source>
    </source>
</evidence>
<evidence type="ECO:0000269" key="6">
    <source>
    </source>
</evidence>
<evidence type="ECO:0000269" key="7">
    <source>
    </source>
</evidence>
<evidence type="ECO:0000269" key="8">
    <source>
    </source>
</evidence>
<evidence type="ECO:0000269" key="9">
    <source>
    </source>
</evidence>
<evidence type="ECO:0000303" key="10">
    <source>
    </source>
</evidence>
<evidence type="ECO:0007829" key="11">
    <source>
        <dbReference type="PDB" id="2FY1"/>
    </source>
</evidence>
<comment type="function">
    <text evidence="5 8">RNA-binding protein involved in pre-mRNA splicing. Required for sperm development. Acts additively with TRA2B to promote exon 7 inclusion of the survival motor neuron SMN. Binds non-specifically to mRNAs.</text>
</comment>
<comment type="subunit">
    <text evidence="3 4 5 6 7">Interacts with splicing factor proteins SFRS3/SRP20, TRA2B/SFRS10, KHDRBS1/SAM68 and KHDRBS3.</text>
</comment>
<comment type="interaction">
    <interactant intactId="EBI-8638511">
        <id>P0DJD3</id>
    </interactant>
    <interactant intactId="EBI-8637627">
        <id>Q8WTP8</id>
        <label>AEN</label>
    </interactant>
    <organismsDiffer>false</organismsDiffer>
    <experiments>3</experiments>
</comment>
<comment type="interaction">
    <interactant intactId="EBI-8638511">
        <id>P0DJD3</id>
    </interactant>
    <interactant intactId="EBI-1044593">
        <id>Q9NRW3</id>
        <label>APOBEC3C</label>
    </interactant>
    <organismsDiffer>false</organismsDiffer>
    <experiments>3</experiments>
</comment>
<comment type="interaction">
    <interactant intactId="EBI-8638511">
        <id>P0DJD3</id>
    </interactant>
    <interactant intactId="EBI-745934">
        <id>Q14781</id>
        <label>CBX2</label>
    </interactant>
    <organismsDiffer>false</organismsDiffer>
    <experiments>3</experiments>
</comment>
<comment type="interaction">
    <interactant intactId="EBI-8638511">
        <id>P0DJD3</id>
    </interactant>
    <interactant intactId="EBI-538850">
        <id>Q14011</id>
        <label>CIRBP</label>
    </interactant>
    <organismsDiffer>false</organismsDiffer>
    <experiments>3</experiments>
</comment>
<comment type="interaction">
    <interactant intactId="EBI-8638511">
        <id>P0DJD3</id>
    </interactant>
    <interactant intactId="EBI-745579">
        <id>P49761</id>
        <label>CLK3</label>
    </interactant>
    <organismsDiffer>false</organismsDiffer>
    <experiments>3</experiments>
</comment>
<comment type="interaction">
    <interactant intactId="EBI-8638511">
        <id>P0DJD3</id>
    </interactant>
    <interactant intactId="EBI-304185">
        <id>P61978</id>
        <label>HNRNPK</label>
    </interactant>
    <organismsDiffer>false</organismsDiffer>
    <experiments>3</experiments>
</comment>
<comment type="interaction">
    <interactant intactId="EBI-8638511">
        <id>P0DJD3</id>
    </interactant>
    <interactant intactId="EBI-739832">
        <id>Q8TBB1</id>
        <label>LNX1</label>
    </interactant>
    <organismsDiffer>false</organismsDiffer>
    <experiments>4</experiments>
</comment>
<comment type="interaction">
    <interactant intactId="EBI-8638511">
        <id>P0DJD3</id>
    </interactant>
    <interactant intactId="EBI-10329013">
        <id>Q9Y5E9</id>
        <label>PCDHB14</label>
    </interactant>
    <organismsDiffer>false</organismsDiffer>
    <experiments>3</experiments>
</comment>
<comment type="interaction">
    <interactant intactId="EBI-8638511">
        <id>P0DJD3</id>
    </interactant>
    <interactant intactId="EBI-1567797">
        <id>Q8WWY3</id>
        <label>PRPF31</label>
    </interactant>
    <organismsDiffer>false</organismsDiffer>
    <experiments>3</experiments>
</comment>
<comment type="interaction">
    <interactant intactId="EBI-8638511">
        <id>P0DJD3</id>
    </interactant>
    <interactant intactId="EBI-2803328">
        <id>P79522</id>
        <label>PRR3</label>
    </interactant>
    <organismsDiffer>false</organismsDiffer>
    <experiments>3</experiments>
</comment>
<comment type="interaction">
    <interactant intactId="EBI-8638511">
        <id>P0DJD3</id>
    </interactant>
    <interactant intactId="EBI-2949699">
        <id>P98179</id>
        <label>RBM3</label>
    </interactant>
    <organismsDiffer>false</organismsDiffer>
    <experiments>4</experiments>
</comment>
<comment type="interaction">
    <interactant intactId="EBI-8638511">
        <id>P0DJD3</id>
    </interactant>
    <interactant intactId="EBI-743526">
        <id>P38159</id>
        <label>RBMX</label>
    </interactant>
    <organismsDiffer>false</organismsDiffer>
    <experiments>3</experiments>
</comment>
<comment type="interaction">
    <interactant intactId="EBI-8638511">
        <id>P0DJD3</id>
    </interactant>
    <interactant intactId="EBI-710997">
        <id>P54274</id>
        <label>TERF1</label>
    </interactant>
    <organismsDiffer>false</organismsDiffer>
    <experiments>2</experiments>
</comment>
<comment type="interaction">
    <interactant intactId="EBI-8638511">
        <id>P0DJD3</id>
    </interactant>
    <interactant intactId="EBI-1210473">
        <id>Q96PQ6</id>
        <label>ZNF317</label>
    </interactant>
    <organismsDiffer>false</organismsDiffer>
    <experiments>5</experiments>
</comment>
<comment type="interaction">
    <interactant intactId="EBI-11994018">
        <id>P0DJD3-2</id>
    </interactant>
    <interactant intactId="EBI-1051531">
        <id>Q6P158</id>
        <label>DHX57</label>
    </interactant>
    <organismsDiffer>false</organismsDiffer>
    <experiments>3</experiments>
</comment>
<comment type="interaction">
    <interactant intactId="EBI-11994018">
        <id>P0DJD3-2</id>
    </interactant>
    <interactant intactId="EBI-719843">
        <id>P02008</id>
        <label>HBZ</label>
    </interactant>
    <organismsDiffer>false</organismsDiffer>
    <experiments>3</experiments>
</comment>
<comment type="interaction">
    <interactant intactId="EBI-11994018">
        <id>P0DJD3-2</id>
    </interactant>
    <interactant intactId="EBI-7060731">
        <id>P61978-2</id>
        <label>HNRNPK</label>
    </interactant>
    <organismsDiffer>false</organismsDiffer>
    <experiments>3</experiments>
</comment>
<comment type="interaction">
    <interactant intactId="EBI-11994018">
        <id>P0DJD3-2</id>
    </interactant>
    <interactant intactId="EBI-12028858">
        <id>Q8IXW0</id>
        <label>LMNTD2</label>
    </interactant>
    <organismsDiffer>false</organismsDiffer>
    <experiments>3</experiments>
</comment>
<comment type="interaction">
    <interactant intactId="EBI-11994018">
        <id>P0DJD3-2</id>
    </interactant>
    <interactant intactId="EBI-2858213">
        <id>Q86VE0</id>
        <label>MYPOP</label>
    </interactant>
    <organismsDiffer>false</organismsDiffer>
    <experiments>3</experiments>
</comment>
<comment type="interaction">
    <interactant intactId="EBI-11994018">
        <id>P0DJD3-2</id>
    </interactant>
    <interactant intactId="EBI-10329013">
        <id>Q9Y5E9</id>
        <label>PCDHB14</label>
    </interactant>
    <organismsDiffer>false</organismsDiffer>
    <experiments>3</experiments>
</comment>
<comment type="interaction">
    <interactant intactId="EBI-11994018">
        <id>P0DJD3-2</id>
    </interactant>
    <interactant intactId="EBI-1567797">
        <id>Q8WWY3</id>
        <label>PRPF31</label>
    </interactant>
    <organismsDiffer>false</organismsDiffer>
    <experiments>6</experiments>
</comment>
<comment type="interaction">
    <interactant intactId="EBI-11994018">
        <id>P0DJD3-2</id>
    </interactant>
    <interactant intactId="EBI-2803328">
        <id>P79522</id>
        <label>PRR3</label>
    </interactant>
    <organismsDiffer>false</organismsDiffer>
    <experiments>3</experiments>
</comment>
<comment type="interaction">
    <interactant intactId="EBI-11994018">
        <id>P0DJD3-2</id>
    </interactant>
    <interactant intactId="EBI-740818">
        <id>Q9Y272</id>
        <label>RASD1</label>
    </interactant>
    <organismsDiffer>false</organismsDiffer>
    <experiments>3</experiments>
</comment>
<comment type="interaction">
    <interactant intactId="EBI-11994018">
        <id>P0DJD3-2</id>
    </interactant>
    <interactant intactId="EBI-2949699">
        <id>P98179</id>
        <label>RBM3</label>
    </interactant>
    <organismsDiffer>false</organismsDiffer>
    <experiments>3</experiments>
</comment>
<comment type="interaction">
    <interactant intactId="EBI-11994018">
        <id>P0DJD3-2</id>
    </interactant>
    <interactant intactId="EBI-743526">
        <id>P38159</id>
        <label>RBMX</label>
    </interactant>
    <organismsDiffer>false</organismsDiffer>
    <experiments>4</experiments>
</comment>
<comment type="interaction">
    <interactant intactId="EBI-11994018">
        <id>P0DJD3-2</id>
    </interactant>
    <interactant intactId="EBI-8642021">
        <id>Q15415</id>
        <label>RBMY1J</label>
    </interactant>
    <organismsDiffer>false</organismsDiffer>
    <experiments>3</experiments>
</comment>
<comment type="interaction">
    <interactant intactId="EBI-11994018">
        <id>P0DJD3-2</id>
    </interactant>
    <interactant intactId="EBI-607085">
        <id>P09012</id>
        <label>SNRPA</label>
    </interactant>
    <organismsDiffer>false</organismsDiffer>
    <experiments>4</experiments>
</comment>
<comment type="interaction">
    <interactant intactId="EBI-11994018">
        <id>P0DJD3-2</id>
    </interactant>
    <interactant intactId="EBI-12001016">
        <id>P07101-3</id>
        <label>TH</label>
    </interactant>
    <organismsDiffer>false</organismsDiffer>
    <experiments>3</experiments>
</comment>
<comment type="interaction">
    <interactant intactId="EBI-11994018">
        <id>P0DJD3-2</id>
    </interactant>
    <interactant intactId="EBI-2849854">
        <id>Q96MU7</id>
        <label>YTHDC1</label>
    </interactant>
    <organismsDiffer>false</organismsDiffer>
    <experiments>3</experiments>
</comment>
<comment type="interaction">
    <interactant intactId="EBI-11994018">
        <id>P0DJD3-2</id>
    </interactant>
    <interactant intactId="EBI-1210473">
        <id>Q96PQ6</id>
        <label>ZNF317</label>
    </interactant>
    <organismsDiffer>false</organismsDiffer>
    <experiments>3</experiments>
</comment>
<comment type="subcellular location">
    <subcellularLocation>
        <location evidence="9">Nucleus</location>
    </subcellularLocation>
</comment>
<comment type="alternative products">
    <event type="alternative splicing"/>
    <isoform>
        <id>P0DJD3-1</id>
        <name>1</name>
        <sequence type="displayed"/>
    </isoform>
    <isoform>
        <id>P0DJD3-2</id>
        <name>2</name>
        <sequence type="described" ref="VSP_042316"/>
    </isoform>
    <isoform>
        <id>P0DJD3-3</id>
        <name>3</name>
        <sequence type="described" ref="VSP_042315"/>
    </isoform>
</comment>
<comment type="tissue specificity">
    <text evidence="8">Testis-specific.</text>
</comment>
<comment type="developmental stage">
    <text evidence="9">Expressed in all of the transcriptionally active stages of germ cell development from spermatogonia through spermatocytes to round spermatids.</text>
</comment>
<comment type="miscellaneous">
    <text>The RBMY1 proteins are encoded by repeated regions of the Y chromosome, mostly within the AZFb region. The exact number of functional copies is unclear and may vary between individuals, and some of them may represent pseudogenes. The proteins are very similar, which makes the characterization of each protein difficult. Thus, most experiments do not discriminate between the different members. One can therefore suppose that reported interactions with a RBMY1 protein involve all the proteins.</text>
</comment>
<gene>
    <name type="primary">RBMY1A1</name>
    <name type="synonym">RBM1</name>
    <name type="synonym">RBM2</name>
    <name type="synonym">YRRM1</name>
    <name type="synonym">YRRM2</name>
</gene>
<sequence length="496" mass="55784">MVEADHPGKLFIGGLNRETNEKMLKAVFGKHGPISEVLLIKDRTSKSRGFAFITFENPADAKNAAKDMNGKSLHGKAIKVEQAKKPSFQSGGRRRPPASSRNRSPSGSLRSARGSRGGTRGWLPSHEGHLDDGGYTPDLKMSYSRGLIPVKRGPSSRSGGPPPKKSAPSAVARSNSWMGSQGPMSQRRENYGVPPRRATISSWRNDRMSTRHDGYATNDGNHPSCQETRDYAPPSRGYAYRDNGHSNRDEHSSRGYRNHRSSRETRDYAPPSRGHAYRDYGHSRRDESYSRGYRNRRSSRETREYAPPSRGHGYRDYGHSRRHESYSRGYRNHPSSRETRDYAPPHRDYAYRDYGHSSWDEHSSRGYSYHDGYGEALGRDHSEHLSGSSYRDALQRYGTSHGAPPARGPRMSYGGSTCHAYSNTRDRYGRSWESYSSCGDFHYCDREHVCRKDQRNPPSLGRVLPDPREACGSSSYVASIVDGGESRSEKGDSSRY</sequence>
<protein>
    <recommendedName>
        <fullName>RNA-binding motif protein, Y chromosome, family 1 member A1</fullName>
    </recommendedName>
    <alternativeName>
        <fullName>RNA-binding motif protein 1</fullName>
    </alternativeName>
    <alternativeName>
        <fullName>RNA-binding motif protein 2</fullName>
    </alternativeName>
    <alternativeName>
        <fullName>Y chromosome RNA recognition motif 1</fullName>
        <shortName>hRBMY</shortName>
    </alternativeName>
</protein>
<accession>P0DJD3</accession>
<accession>Q15376</accession>
<accession>Q15377</accession>
<accession>Q15414</accession>
<accession>Q6NSB5</accession>
<accession>Q86VU6</accession>
<accession>Q8NHR0</accession>
<keyword id="KW-0002">3D-structure</keyword>
<keyword id="KW-0010">Activator</keyword>
<keyword id="KW-0025">Alternative splicing</keyword>
<keyword id="KW-0507">mRNA processing</keyword>
<keyword id="KW-0508">mRNA splicing</keyword>
<keyword id="KW-0539">Nucleus</keyword>
<keyword id="KW-1185">Reference proteome</keyword>
<keyword id="KW-0694">RNA-binding</keyword>
<reference key="1">
    <citation type="journal article" date="1993" name="Cell">
        <title>A Y chromosome gene family with RNA-binding protein homology: candidates for the azoospermia factor AZF controlling human spermatogenesis.</title>
        <authorList>
            <person name="Ma K."/>
            <person name="Inglis J.D."/>
            <person name="Sharkey A."/>
            <person name="Bickmore W.A."/>
            <person name="Hill R.E."/>
            <person name="Prosser E.J."/>
            <person name="Speedson R.M."/>
            <person name="Thomson E.J."/>
            <person name="Jobling M."/>
        </authorList>
    </citation>
    <scope>NUCLEOTIDE SEQUENCE [MRNA] (ISOFORM 1)</scope>
    <scope>FUNCTION</scope>
    <scope>TISSUE SPECIFICITY</scope>
    <source>
        <tissue>Testis</tissue>
    </source>
</reference>
<reference key="2">
    <citation type="journal article" date="2004" name="Genome Res.">
        <title>The status, quality, and expansion of the NIH full-length cDNA project: the Mammalian Gene Collection (MGC).</title>
        <authorList>
            <consortium name="The MGC Project Team"/>
        </authorList>
    </citation>
    <scope>NUCLEOTIDE SEQUENCE [LARGE SCALE MRNA] (ISOFORMS 2 AND 3)</scope>
    <source>
        <tissue>Brain</tissue>
        <tissue>Testis</tissue>
    </source>
</reference>
<reference key="3">
    <citation type="journal article" date="2003" name="Nature">
        <title>The male-specific region of the human Y chromosome is a mosaic of discrete sequence classes.</title>
        <authorList>
            <person name="Skaletsky H."/>
            <person name="Kuroda-Kawaguchi T."/>
            <person name="Minx P.J."/>
            <person name="Cordum H.S."/>
            <person name="Hillier L.W."/>
            <person name="Brown L.G."/>
            <person name="Repping S."/>
            <person name="Pyntikova T."/>
            <person name="Ali J."/>
            <person name="Bieri T."/>
            <person name="Chinwalla A."/>
            <person name="Delehaunty A."/>
            <person name="Delehaunty K."/>
            <person name="Du H."/>
            <person name="Fewell G."/>
            <person name="Fulton L."/>
            <person name="Fulton R."/>
            <person name="Graves T.A."/>
            <person name="Hou S.-F."/>
            <person name="Latrielle P."/>
            <person name="Leonard S."/>
            <person name="Mardis E."/>
            <person name="Maupin R."/>
            <person name="McPherson J."/>
            <person name="Miner T."/>
            <person name="Nash W."/>
            <person name="Nguyen C."/>
            <person name="Ozersky P."/>
            <person name="Pepin K."/>
            <person name="Rock S."/>
            <person name="Rohlfing T."/>
            <person name="Scott K."/>
            <person name="Schultz B."/>
            <person name="Strong C."/>
            <person name="Tin-Wollam A."/>
            <person name="Yang S.-P."/>
            <person name="Waterston R.H."/>
            <person name="Wilson R.K."/>
            <person name="Rozen S."/>
            <person name="Page D.C."/>
        </authorList>
    </citation>
    <scope>NUCLEOTIDE SEQUENCE [LARGE SCALE GENOMIC DNA]</scope>
</reference>
<reference key="4">
    <citation type="journal article" date="1998" name="Genomics">
        <title>Structure and organization of the RBMY genes on the human Y chromosome: transposition and amplification of an ancestral autosomal hnRNPG gene.</title>
        <authorList>
            <person name="Chai N.-N."/>
            <person name="Zhou H."/>
            <person name="Hernandez J."/>
            <person name="Najmabadi H."/>
            <person name="Bhasin S."/>
            <person name="Yen P.H."/>
        </authorList>
    </citation>
    <scope>IDENTIFICATION</scope>
</reference>
<reference key="5">
    <citation type="journal article" date="1997" name="Proc. Natl. Acad. Sci. U.S.A.">
        <title>Expression of RBM in the nuclei of human germ cells is dependent on a critical region of the Y chromosome long arm.</title>
        <authorList>
            <person name="Elliott D.J."/>
            <person name="Millar M.R."/>
            <person name="Oghene K."/>
            <person name="Ross A."/>
            <person name="Kiesewetter F."/>
            <person name="Pryor J."/>
            <person name="McIntyre M."/>
            <person name="Hargreave T.B."/>
            <person name="Saunders P.T.K."/>
            <person name="Vogt P.H."/>
            <person name="Chandley A.C."/>
            <person name="Cooke H."/>
        </authorList>
    </citation>
    <scope>SUBCELLULAR LOCATION</scope>
    <scope>DEVELOPMENTAL STAGE</scope>
</reference>
<reference key="6">
    <citation type="journal article" date="1999" name="Hum. Mol. Genet.">
        <title>T-STAR/ETOILE: a novel relative of SAM68 that interacts with an RNA-binding protein implicated in spermatogenesis.</title>
        <authorList>
            <person name="Venables J.P."/>
            <person name="Vernet C."/>
            <person name="Chew S.L."/>
            <person name="Elliott D.J."/>
            <person name="Cowmeadow R.B."/>
            <person name="Wu J."/>
            <person name="Cooke H.J."/>
            <person name="Artzt K."/>
            <person name="Eperon I.C."/>
        </authorList>
    </citation>
    <scope>INTERACTION WITH KHDRBS3</scope>
</reference>
<reference key="7">
    <citation type="journal article" date="2000" name="Hum. Mol. Genet.">
        <title>RBMY, a probable human spermatogenesis factor, and other hnRNP G proteins interact with Tra2beta and affect splicing.</title>
        <authorList>
            <person name="Venables J.P."/>
            <person name="Elliott D.J."/>
            <person name="Makarova O.V."/>
            <person name="Makarov E.M."/>
            <person name="Cooke H.J."/>
            <person name="Eperon E.C."/>
        </authorList>
    </citation>
    <scope>INTERACTION WITH TRA2B</scope>
    <source>
        <tissue>Testis</tissue>
    </source>
</reference>
<reference key="8">
    <citation type="journal article" date="2002" name="Hum. Mol. Genet.">
        <title>hnRNP-G promotes exon 7 inclusion of survival motor neuron (SMN) via direct interaction with Htra2-beta1.</title>
        <authorList>
            <person name="Hofmann Y."/>
            <person name="Wirth B."/>
        </authorList>
    </citation>
    <scope>FUNCTION</scope>
    <scope>INTERACTION WITH TRA2B</scope>
    <scope>RNA-BINDING</scope>
</reference>
<reference key="9">
    <citation type="journal article" date="2004" name="Int. J. Androl.">
        <title>The role of potential splicing factors including RBMY, RBMX, hnRNPG-T and STAR proteins in spermatogenesis.</title>
        <authorList>
            <person name="Elliott D.J."/>
        </authorList>
    </citation>
    <scope>INTERACTION WITH KHDRBS1</scope>
</reference>
<reference key="10">
    <citation type="journal article" date="2007" name="EMBO Rep.">
        <title>The testis-specific human protein RBMY recognizes RNA through a novel mode of interaction.</title>
        <authorList>
            <person name="Skrisovska L."/>
            <person name="Bourgeois C.F."/>
            <person name="Stefl R."/>
            <person name="Grellscheid S.-N."/>
            <person name="Kister L."/>
            <person name="Wenter P."/>
            <person name="Elliott D.J."/>
            <person name="Stevenin J."/>
            <person name="Allain F.H.-T."/>
        </authorList>
    </citation>
    <scope>STRUCTURE BY NMR OF 1-109 IN COMPLEX WITH RNA</scope>
</reference>
<name>RBY1A_HUMAN</name>
<dbReference type="EMBL" id="X76059">
    <property type="protein sequence ID" value="CAA53659.1"/>
    <property type="molecule type" value="mRNA"/>
</dbReference>
<dbReference type="EMBL" id="BC047768">
    <property type="protein sequence ID" value="AAH47768.1"/>
    <property type="molecule type" value="mRNA"/>
</dbReference>
<dbReference type="EMBL" id="BC070298">
    <property type="protein sequence ID" value="AAH70298.1"/>
    <property type="molecule type" value="mRNA"/>
</dbReference>
<dbReference type="EMBL" id="AC010141">
    <property type="status" value="NOT_ANNOTATED_CDS"/>
    <property type="molecule type" value="Genomic_DNA"/>
</dbReference>
<dbReference type="CCDS" id="CCDS14796.1">
    <molecule id="P0DJD3-1"/>
</dbReference>
<dbReference type="PIR" id="A49418">
    <property type="entry name" value="A49418"/>
</dbReference>
<dbReference type="RefSeq" id="NP_001307873.1">
    <molecule id="P0DJD3-2"/>
    <property type="nucleotide sequence ID" value="NM_001320944.2"/>
</dbReference>
<dbReference type="RefSeq" id="NP_001307874.1">
    <molecule id="P0DJD3-3"/>
    <property type="nucleotide sequence ID" value="NM_001320945.2"/>
</dbReference>
<dbReference type="RefSeq" id="NP_005049.1">
    <molecule id="P0DJD3-1"/>
    <property type="nucleotide sequence ID" value="NM_005058.4"/>
</dbReference>
<dbReference type="RefSeq" id="XP_011529792.1">
    <property type="nucleotide sequence ID" value="XM_011531490.1"/>
</dbReference>
<dbReference type="PDB" id="2FY1">
    <property type="method" value="NMR"/>
    <property type="chains" value="A=1-109"/>
</dbReference>
<dbReference type="PDBsum" id="2FY1"/>
<dbReference type="SMR" id="P0DJD3"/>
<dbReference type="BioGRID" id="111875">
    <property type="interactions" value="29"/>
</dbReference>
<dbReference type="FunCoup" id="P0DJD3">
    <property type="interactions" value="37"/>
</dbReference>
<dbReference type="IntAct" id="P0DJD3">
    <property type="interactions" value="25"/>
</dbReference>
<dbReference type="MINT" id="P0DJD3"/>
<dbReference type="STRING" id="9606.ENSP00000372154"/>
<dbReference type="iPTMnet" id="P0DJD3"/>
<dbReference type="PhosphoSitePlus" id="P0DJD3"/>
<dbReference type="BioMuta" id="RBMY1A1"/>
<dbReference type="DMDM" id="378522864"/>
<dbReference type="MassIVE" id="P0DJD3"/>
<dbReference type="PeptideAtlas" id="P0DJD3"/>
<dbReference type="ProteomicsDB" id="52542">
    <molecule id="P0DJD3-3"/>
</dbReference>
<dbReference type="Antibodypedia" id="34794">
    <property type="antibodies" value="185 antibodies from 25 providers"/>
</dbReference>
<dbReference type="DNASU" id="5940"/>
<dbReference type="Ensembl" id="ENST00000382707.6">
    <molecule id="P0DJD3-1"/>
    <property type="protein sequence ID" value="ENSP00000372154.2"/>
    <property type="gene ID" value="ENSG00000234414.8"/>
</dbReference>
<dbReference type="GeneID" id="5940"/>
<dbReference type="KEGG" id="hsa:5940"/>
<dbReference type="MANE-Select" id="ENST00000382707.6">
    <property type="protein sequence ID" value="ENSP00000372154.2"/>
    <property type="RefSeq nucleotide sequence ID" value="NM_005058.4"/>
    <property type="RefSeq protein sequence ID" value="NP_005049.1"/>
</dbReference>
<dbReference type="UCSC" id="uc004fuq.4">
    <molecule id="P0DJD3-1"/>
    <property type="organism name" value="human"/>
</dbReference>
<dbReference type="AGR" id="HGNC:9912"/>
<dbReference type="CTD" id="5940"/>
<dbReference type="DisGeNET" id="5940"/>
<dbReference type="GeneCards" id="RBMY1A1"/>
<dbReference type="GeneReviews" id="RBMY1A1"/>
<dbReference type="HGNC" id="HGNC:9912">
    <property type="gene designation" value="RBMY1A1"/>
</dbReference>
<dbReference type="HPA" id="ENSG00000234414">
    <property type="expression patterns" value="Tissue enriched (testis)"/>
</dbReference>
<dbReference type="MalaCards" id="RBMY1A1"/>
<dbReference type="MIM" id="400006">
    <property type="type" value="gene"/>
</dbReference>
<dbReference type="neXtProt" id="NX_P0DJD3"/>
<dbReference type="OpenTargets" id="ENSG00000234414"/>
<dbReference type="Orphanet" id="1646">
    <property type="disease" value="Chromosome Y microdeletion syndrome"/>
</dbReference>
<dbReference type="VEuPathDB" id="HostDB:ENSG00000234414"/>
<dbReference type="GeneTree" id="ENSGT00940000163524"/>
<dbReference type="HOGENOM" id="CLU_042286_0_0_1"/>
<dbReference type="InParanoid" id="P0DJD3"/>
<dbReference type="OMA" id="DEIFIMR"/>
<dbReference type="PAN-GO" id="P0DJD3">
    <property type="GO annotations" value="3 GO annotations based on evolutionary models"/>
</dbReference>
<dbReference type="PhylomeDB" id="P0DJD3"/>
<dbReference type="TreeFam" id="TF331833"/>
<dbReference type="PathwayCommons" id="P0DJD3"/>
<dbReference type="SignaLink" id="P0DJD3"/>
<dbReference type="BioGRID-ORCS" id="378949">
    <property type="hits" value="8 hits in 252 CRISPR screens"/>
</dbReference>
<dbReference type="BioGRID-ORCS" id="5940">
    <property type="hits" value="10 hits in 252 CRISPR screens"/>
</dbReference>
<dbReference type="EvolutionaryTrace" id="P0DJD3"/>
<dbReference type="Pharos" id="P0DJD3">
    <property type="development level" value="Tbio"/>
</dbReference>
<dbReference type="PRO" id="PR:P0DJD3"/>
<dbReference type="Proteomes" id="UP000005640">
    <property type="component" value="Chromosome Y"/>
</dbReference>
<dbReference type="RNAct" id="P0DJD3">
    <property type="molecule type" value="protein"/>
</dbReference>
<dbReference type="Bgee" id="ENSG00000234414">
    <property type="expression patterns" value="Expressed in male germ line stem cell (sensu Vertebrata) in testis and 13 other cell types or tissues"/>
</dbReference>
<dbReference type="ExpressionAtlas" id="P0DJD3">
    <property type="expression patterns" value="baseline"/>
</dbReference>
<dbReference type="GO" id="GO:0005730">
    <property type="term" value="C:nucleolus"/>
    <property type="evidence" value="ECO:0000314"/>
    <property type="project" value="HPA"/>
</dbReference>
<dbReference type="GO" id="GO:0005654">
    <property type="term" value="C:nucleoplasm"/>
    <property type="evidence" value="ECO:0000314"/>
    <property type="project" value="HPA"/>
</dbReference>
<dbReference type="GO" id="GO:0005681">
    <property type="term" value="C:spliceosomal complex"/>
    <property type="evidence" value="ECO:0000318"/>
    <property type="project" value="GO_Central"/>
</dbReference>
<dbReference type="GO" id="GO:0003729">
    <property type="term" value="F:mRNA binding"/>
    <property type="evidence" value="ECO:0000314"/>
    <property type="project" value="UniProtKB"/>
</dbReference>
<dbReference type="GO" id="GO:0003723">
    <property type="term" value="F:RNA binding"/>
    <property type="evidence" value="ECO:0000318"/>
    <property type="project" value="GO_Central"/>
</dbReference>
<dbReference type="GO" id="GO:0006397">
    <property type="term" value="P:mRNA processing"/>
    <property type="evidence" value="ECO:0007669"/>
    <property type="project" value="UniProtKB-KW"/>
</dbReference>
<dbReference type="GO" id="GO:0048026">
    <property type="term" value="P:positive regulation of mRNA splicing, via spliceosome"/>
    <property type="evidence" value="ECO:0000318"/>
    <property type="project" value="GO_Central"/>
</dbReference>
<dbReference type="GO" id="GO:0000381">
    <property type="term" value="P:regulation of alternative mRNA splicing, via spliceosome"/>
    <property type="evidence" value="ECO:0000314"/>
    <property type="project" value="UniProtKB"/>
</dbReference>
<dbReference type="GO" id="GO:0008380">
    <property type="term" value="P:RNA splicing"/>
    <property type="evidence" value="ECO:0007669"/>
    <property type="project" value="UniProtKB-KW"/>
</dbReference>
<dbReference type="CDD" id="cd12382">
    <property type="entry name" value="RRM_RBMX_like"/>
    <property type="match status" value="1"/>
</dbReference>
<dbReference type="FunFam" id="3.30.70.330:FF:000470">
    <property type="entry name" value="RNA-binding motif protein, Y chromosome, family 1 member F/J"/>
    <property type="match status" value="1"/>
</dbReference>
<dbReference type="Gene3D" id="3.30.70.330">
    <property type="match status" value="1"/>
</dbReference>
<dbReference type="InterPro" id="IPR012677">
    <property type="entry name" value="Nucleotide-bd_a/b_plait_sf"/>
</dbReference>
<dbReference type="InterPro" id="IPR035979">
    <property type="entry name" value="RBD_domain_sf"/>
</dbReference>
<dbReference type="InterPro" id="IPR050441">
    <property type="entry name" value="RBM"/>
</dbReference>
<dbReference type="InterPro" id="IPR012604">
    <property type="entry name" value="RBM1CTR"/>
</dbReference>
<dbReference type="InterPro" id="IPR000504">
    <property type="entry name" value="RRM_dom"/>
</dbReference>
<dbReference type="PANTHER" id="PTHR48034">
    <property type="entry name" value="TRANSFORMER-2 SEX-DETERMINING PROTEIN-RELATED"/>
    <property type="match status" value="1"/>
</dbReference>
<dbReference type="Pfam" id="PF08081">
    <property type="entry name" value="RBM1CTR"/>
    <property type="match status" value="1"/>
</dbReference>
<dbReference type="Pfam" id="PF00076">
    <property type="entry name" value="RRM_1"/>
    <property type="match status" value="1"/>
</dbReference>
<dbReference type="SMART" id="SM00360">
    <property type="entry name" value="RRM"/>
    <property type="match status" value="1"/>
</dbReference>
<dbReference type="SUPFAM" id="SSF54928">
    <property type="entry name" value="RNA-binding domain, RBD"/>
    <property type="match status" value="1"/>
</dbReference>
<dbReference type="PROSITE" id="PS50102">
    <property type="entry name" value="RRM"/>
    <property type="match status" value="1"/>
</dbReference>
<organism>
    <name type="scientific">Homo sapiens</name>
    <name type="common">Human</name>
    <dbReference type="NCBI Taxonomy" id="9606"/>
    <lineage>
        <taxon>Eukaryota</taxon>
        <taxon>Metazoa</taxon>
        <taxon>Chordata</taxon>
        <taxon>Craniata</taxon>
        <taxon>Vertebrata</taxon>
        <taxon>Euteleostomi</taxon>
        <taxon>Mammalia</taxon>
        <taxon>Eutheria</taxon>
        <taxon>Euarchontoglires</taxon>
        <taxon>Primates</taxon>
        <taxon>Haplorrhini</taxon>
        <taxon>Catarrhini</taxon>
        <taxon>Hominidae</taxon>
        <taxon>Homo</taxon>
    </lineage>
</organism>